<proteinExistence type="inferred from homology"/>
<dbReference type="EC" id="2.1.1.177" evidence="1"/>
<dbReference type="EMBL" id="CP000485">
    <property type="protein sequence ID" value="ABK88131.1"/>
    <property type="status" value="ALT_INIT"/>
    <property type="molecule type" value="Genomic_DNA"/>
</dbReference>
<dbReference type="RefSeq" id="WP_001027003.1">
    <property type="nucleotide sequence ID" value="NC_008600.1"/>
</dbReference>
<dbReference type="SMR" id="A0RLN8"/>
<dbReference type="GeneID" id="93005667"/>
<dbReference type="KEGG" id="btl:BALH_4966"/>
<dbReference type="HOGENOM" id="CLU_100552_0_0_9"/>
<dbReference type="GO" id="GO:0005737">
    <property type="term" value="C:cytoplasm"/>
    <property type="evidence" value="ECO:0007669"/>
    <property type="project" value="UniProtKB-SubCell"/>
</dbReference>
<dbReference type="GO" id="GO:0070038">
    <property type="term" value="F:rRNA (pseudouridine-N3-)-methyltransferase activity"/>
    <property type="evidence" value="ECO:0007669"/>
    <property type="project" value="UniProtKB-UniRule"/>
</dbReference>
<dbReference type="CDD" id="cd18081">
    <property type="entry name" value="RlmH-like"/>
    <property type="match status" value="1"/>
</dbReference>
<dbReference type="Gene3D" id="3.40.1280.10">
    <property type="match status" value="1"/>
</dbReference>
<dbReference type="HAMAP" id="MF_00658">
    <property type="entry name" value="23SrRNA_methyltr_H"/>
    <property type="match status" value="1"/>
</dbReference>
<dbReference type="InterPro" id="IPR029028">
    <property type="entry name" value="Alpha/beta_knot_MTases"/>
</dbReference>
<dbReference type="InterPro" id="IPR003742">
    <property type="entry name" value="RlmH-like"/>
</dbReference>
<dbReference type="InterPro" id="IPR029026">
    <property type="entry name" value="tRNA_m1G_MTases_N"/>
</dbReference>
<dbReference type="NCBIfam" id="NF000985">
    <property type="entry name" value="PRK00103.1-3"/>
    <property type="match status" value="1"/>
</dbReference>
<dbReference type="NCBIfam" id="TIGR00246">
    <property type="entry name" value="tRNA_RlmH_YbeA"/>
    <property type="match status" value="1"/>
</dbReference>
<dbReference type="PANTHER" id="PTHR33603">
    <property type="entry name" value="METHYLTRANSFERASE"/>
    <property type="match status" value="1"/>
</dbReference>
<dbReference type="PANTHER" id="PTHR33603:SF1">
    <property type="entry name" value="RIBOSOMAL RNA LARGE SUBUNIT METHYLTRANSFERASE H"/>
    <property type="match status" value="1"/>
</dbReference>
<dbReference type="Pfam" id="PF02590">
    <property type="entry name" value="SPOUT_MTase"/>
    <property type="match status" value="1"/>
</dbReference>
<dbReference type="PIRSF" id="PIRSF004505">
    <property type="entry name" value="MT_bac"/>
    <property type="match status" value="1"/>
</dbReference>
<dbReference type="SUPFAM" id="SSF75217">
    <property type="entry name" value="alpha/beta knot"/>
    <property type="match status" value="1"/>
</dbReference>
<comment type="function">
    <text evidence="1">Specifically methylates the pseudouridine at position 1915 (m3Psi1915) in 23S rRNA.</text>
</comment>
<comment type="catalytic activity">
    <reaction evidence="1">
        <text>pseudouridine(1915) in 23S rRNA + S-adenosyl-L-methionine = N(3)-methylpseudouridine(1915) in 23S rRNA + S-adenosyl-L-homocysteine + H(+)</text>
        <dbReference type="Rhea" id="RHEA:42752"/>
        <dbReference type="Rhea" id="RHEA-COMP:10221"/>
        <dbReference type="Rhea" id="RHEA-COMP:10222"/>
        <dbReference type="ChEBI" id="CHEBI:15378"/>
        <dbReference type="ChEBI" id="CHEBI:57856"/>
        <dbReference type="ChEBI" id="CHEBI:59789"/>
        <dbReference type="ChEBI" id="CHEBI:65314"/>
        <dbReference type="ChEBI" id="CHEBI:74486"/>
        <dbReference type="EC" id="2.1.1.177"/>
    </reaction>
</comment>
<comment type="subunit">
    <text evidence="1">Homodimer.</text>
</comment>
<comment type="subcellular location">
    <subcellularLocation>
        <location evidence="1">Cytoplasm</location>
    </subcellularLocation>
</comment>
<comment type="similarity">
    <text evidence="1">Belongs to the RNA methyltransferase RlmH family.</text>
</comment>
<comment type="sequence caution" evidence="2">
    <conflict type="erroneous initiation">
        <sequence resource="EMBL-CDS" id="ABK88131"/>
    </conflict>
</comment>
<accession>A0RLN8</accession>
<evidence type="ECO:0000255" key="1">
    <source>
        <dbReference type="HAMAP-Rule" id="MF_00658"/>
    </source>
</evidence>
<evidence type="ECO:0000305" key="2"/>
<reference key="1">
    <citation type="journal article" date="2007" name="J. Bacteriol.">
        <title>The complete genome sequence of Bacillus thuringiensis Al Hakam.</title>
        <authorList>
            <person name="Challacombe J.F."/>
            <person name="Altherr M.R."/>
            <person name="Xie G."/>
            <person name="Bhotika S.S."/>
            <person name="Brown N."/>
            <person name="Bruce D."/>
            <person name="Campbell C.S."/>
            <person name="Campbell M.L."/>
            <person name="Chen J."/>
            <person name="Chertkov O."/>
            <person name="Cleland C."/>
            <person name="Dimitrijevic M."/>
            <person name="Doggett N.A."/>
            <person name="Fawcett J.J."/>
            <person name="Glavina T."/>
            <person name="Goodwin L.A."/>
            <person name="Green L.D."/>
            <person name="Han C.S."/>
            <person name="Hill K.K."/>
            <person name="Hitchcock P."/>
            <person name="Jackson P.J."/>
            <person name="Keim P."/>
            <person name="Kewalramani A.R."/>
            <person name="Longmire J."/>
            <person name="Lucas S."/>
            <person name="Malfatti S."/>
            <person name="Martinez D."/>
            <person name="McMurry K."/>
            <person name="Meincke L.J."/>
            <person name="Misra M."/>
            <person name="Moseman B.L."/>
            <person name="Mundt M."/>
            <person name="Munk A.C."/>
            <person name="Okinaka R.T."/>
            <person name="Parson-Quintana B."/>
            <person name="Reilly L.P."/>
            <person name="Richardson P."/>
            <person name="Robinson D.L."/>
            <person name="Saunders E."/>
            <person name="Tapia R."/>
            <person name="Tesmer J.G."/>
            <person name="Thayer N."/>
            <person name="Thompson L.S."/>
            <person name="Tice H."/>
            <person name="Ticknor L.O."/>
            <person name="Wills P.L."/>
            <person name="Gilna P."/>
            <person name="Brettin T.S."/>
        </authorList>
    </citation>
    <scope>NUCLEOTIDE SEQUENCE [LARGE SCALE GENOMIC DNA]</scope>
    <source>
        <strain>Al Hakam</strain>
    </source>
</reference>
<sequence>MNISIISIGKLKEKYLKQGIAEYLKRLSAYAKVEVIELPDEKAPENLSEAEMLIVKEKEGIRILDKISDDTHVIALAIEGKQKSSEEFAVSLDRLATYGKSKVAFVIGGSLGLSSEVMKRSNESLSFSKMTLPHQLMRLVLLEQVYRAFRINRGEPYHK</sequence>
<feature type="chain" id="PRO_0000366561" description="Ribosomal RNA large subunit methyltransferase H">
    <location>
        <begin position="1"/>
        <end position="159"/>
    </location>
</feature>
<feature type="binding site" evidence="1">
    <location>
        <position position="76"/>
    </location>
    <ligand>
        <name>S-adenosyl-L-methionine</name>
        <dbReference type="ChEBI" id="CHEBI:59789"/>
    </ligand>
</feature>
<feature type="binding site" evidence="1">
    <location>
        <position position="108"/>
    </location>
    <ligand>
        <name>S-adenosyl-L-methionine</name>
        <dbReference type="ChEBI" id="CHEBI:59789"/>
    </ligand>
</feature>
<feature type="binding site" evidence="1">
    <location>
        <begin position="127"/>
        <end position="132"/>
    </location>
    <ligand>
        <name>S-adenosyl-L-methionine</name>
        <dbReference type="ChEBI" id="CHEBI:59789"/>
    </ligand>
</feature>
<protein>
    <recommendedName>
        <fullName evidence="1">Ribosomal RNA large subunit methyltransferase H</fullName>
        <ecNumber evidence="1">2.1.1.177</ecNumber>
    </recommendedName>
    <alternativeName>
        <fullName evidence="1">23S rRNA (pseudouridine1915-N3)-methyltransferase</fullName>
    </alternativeName>
    <alternativeName>
        <fullName evidence="1">23S rRNA m3Psi1915 methyltransferase</fullName>
    </alternativeName>
    <alternativeName>
        <fullName evidence="1">rRNA (pseudouridine-N3-)-methyltransferase RlmH</fullName>
    </alternativeName>
</protein>
<gene>
    <name evidence="1" type="primary">rlmH</name>
    <name type="ordered locus">BALH_4966</name>
</gene>
<keyword id="KW-0963">Cytoplasm</keyword>
<keyword id="KW-0489">Methyltransferase</keyword>
<keyword id="KW-0698">rRNA processing</keyword>
<keyword id="KW-0949">S-adenosyl-L-methionine</keyword>
<keyword id="KW-0808">Transferase</keyword>
<name>RLMH_BACAH</name>
<organism>
    <name type="scientific">Bacillus thuringiensis (strain Al Hakam)</name>
    <dbReference type="NCBI Taxonomy" id="412694"/>
    <lineage>
        <taxon>Bacteria</taxon>
        <taxon>Bacillati</taxon>
        <taxon>Bacillota</taxon>
        <taxon>Bacilli</taxon>
        <taxon>Bacillales</taxon>
        <taxon>Bacillaceae</taxon>
        <taxon>Bacillus</taxon>
        <taxon>Bacillus cereus group</taxon>
    </lineage>
</organism>